<protein>
    <recommendedName>
        <fullName>Double-headed protease inhibitor, submandibular gland</fullName>
    </recommendedName>
</protein>
<dbReference type="PIR" id="C29654">
    <property type="entry name" value="TIDGS"/>
</dbReference>
<dbReference type="SMR" id="P01002"/>
<dbReference type="STRING" id="9615.ENSCAFP00000009968"/>
<dbReference type="MEROPS" id="I01.016"/>
<dbReference type="MEROPS" id="I01.017"/>
<dbReference type="PaxDb" id="9612-ENSCAFP00000009968"/>
<dbReference type="eggNOG" id="KOG3649">
    <property type="taxonomic scope" value="Eukaryota"/>
</dbReference>
<dbReference type="InParanoid" id="P01002"/>
<dbReference type="Proteomes" id="UP000002254">
    <property type="component" value="Unplaced"/>
</dbReference>
<dbReference type="Proteomes" id="UP000694429">
    <property type="component" value="Unplaced"/>
</dbReference>
<dbReference type="Proteomes" id="UP000694542">
    <property type="component" value="Unplaced"/>
</dbReference>
<dbReference type="Proteomes" id="UP000805418">
    <property type="component" value="Unplaced"/>
</dbReference>
<dbReference type="GO" id="GO:0005576">
    <property type="term" value="C:extracellular region"/>
    <property type="evidence" value="ECO:0007669"/>
    <property type="project" value="UniProtKB-SubCell"/>
</dbReference>
<dbReference type="GO" id="GO:0004867">
    <property type="term" value="F:serine-type endopeptidase inhibitor activity"/>
    <property type="evidence" value="ECO:0007669"/>
    <property type="project" value="UniProtKB-KW"/>
</dbReference>
<dbReference type="FunFam" id="3.30.60.30:FF:000037">
    <property type="entry name" value="Ovomucoid"/>
    <property type="match status" value="1"/>
</dbReference>
<dbReference type="Gene3D" id="3.30.60.30">
    <property type="match status" value="2"/>
</dbReference>
<dbReference type="InterPro" id="IPR051597">
    <property type="entry name" value="Bifunctional_prot_inhibitor"/>
</dbReference>
<dbReference type="InterPro" id="IPR002350">
    <property type="entry name" value="Kazal_dom"/>
</dbReference>
<dbReference type="InterPro" id="IPR036058">
    <property type="entry name" value="Kazal_dom_sf"/>
</dbReference>
<dbReference type="InterPro" id="IPR001239">
    <property type="entry name" value="Prot_inh_Kazal-m"/>
</dbReference>
<dbReference type="PANTHER" id="PTHR47729:SF1">
    <property type="entry name" value="OVOMUCOID-LIKE-RELATED"/>
    <property type="match status" value="1"/>
</dbReference>
<dbReference type="PANTHER" id="PTHR47729">
    <property type="entry name" value="SERINE PEPTIDASE INHIBITOR, KAZAL TYPE 2, TANDEM DUPLICATE 1-RELATED"/>
    <property type="match status" value="1"/>
</dbReference>
<dbReference type="Pfam" id="PF00050">
    <property type="entry name" value="Kazal_1"/>
    <property type="match status" value="2"/>
</dbReference>
<dbReference type="PRINTS" id="PR00290">
    <property type="entry name" value="KAZALINHBTR"/>
</dbReference>
<dbReference type="SMART" id="SM00280">
    <property type="entry name" value="KAZAL"/>
    <property type="match status" value="2"/>
</dbReference>
<dbReference type="SUPFAM" id="SSF100895">
    <property type="entry name" value="Kazal-type serine protease inhibitors"/>
    <property type="match status" value="2"/>
</dbReference>
<dbReference type="PROSITE" id="PS00282">
    <property type="entry name" value="KAZAL_1"/>
    <property type="match status" value="2"/>
</dbReference>
<dbReference type="PROSITE" id="PS51465">
    <property type="entry name" value="KAZAL_2"/>
    <property type="match status" value="2"/>
</dbReference>
<evidence type="ECO:0000255" key="1">
    <source>
        <dbReference type="PROSITE-ProRule" id="PRU00798"/>
    </source>
</evidence>
<keyword id="KW-0903">Direct protein sequencing</keyword>
<keyword id="KW-1015">Disulfide bond</keyword>
<keyword id="KW-0646">Protease inhibitor</keyword>
<keyword id="KW-1185">Reference proteome</keyword>
<keyword id="KW-0677">Repeat</keyword>
<keyword id="KW-0964">Secreted</keyword>
<keyword id="KW-0722">Serine protease inhibitor</keyword>
<reference key="1">
    <citation type="journal article" date="1987" name="Biol. Chem. Hoppe-Seyler">
        <title>The amino-acid sequences of the double-headed proteinase inhibitors from cat, lion and dog submandibular glands.</title>
        <authorList>
            <person name="Reisinger P.W.M."/>
            <person name="Hochstrasser K."/>
            <person name="Gottlicher I."/>
            <person name="Eulitz M."/>
            <person name="Wachter E."/>
        </authorList>
    </citation>
    <scope>PROTEIN SEQUENCE</scope>
    <source>
        <tissue>Submandibular gland</tissue>
    </source>
</reference>
<reference key="2">
    <citation type="journal article" date="1975" name="Hoppe-Seyler's Z. Physiol. Chem.">
        <title>The amino acid sequence of the double-headed proteinase inhibitor from canine submandibular glands, III. Sequencing studies.</title>
        <authorList>
            <person name="Hochstrasser K."/>
            <person name="Bretzel G."/>
            <person name="Wachter E."/>
            <person name="Heindl S."/>
        </authorList>
    </citation>
    <scope>PRELIMINARY PROTEIN SEQUENCE</scope>
    <source>
        <tissue>Submandibular gland</tissue>
    </source>
</reference>
<comment type="function">
    <text>This inhibitor is composed of two homologous actively inhibiting halves: one which inhibits trypsin, the other which inhibits elastase.</text>
</comment>
<comment type="subcellular location">
    <subcellularLocation>
        <location>Secreted</location>
    </subcellularLocation>
</comment>
<comment type="miscellaneous">
    <text>Three very similar inhibitors found in the submandibular glands are secreted into the saliva. The sequence shown is one of the two main inhibitors.</text>
</comment>
<feature type="chain" id="PRO_0000073035" description="Double-headed protease inhibitor, submandibular gland">
    <location>
        <begin position="1"/>
        <end position="115"/>
    </location>
</feature>
<feature type="domain" description="Kazal-like 1" evidence="1">
    <location>
        <begin position="6"/>
        <end position="66"/>
    </location>
</feature>
<feature type="domain" description="Kazal-like 2" evidence="1">
    <location>
        <begin position="67"/>
        <end position="115"/>
    </location>
</feature>
<feature type="site" description="Reactive bond 1 for trypsin">
    <location>
        <begin position="26"/>
        <end position="27"/>
    </location>
</feature>
<feature type="site" description="Reactive bond 2 for elastase">
    <location>
        <begin position="77"/>
        <end position="78"/>
    </location>
</feature>
<feature type="disulfide bond" evidence="1">
    <location>
        <begin position="12"/>
        <end position="46"/>
    </location>
</feature>
<feature type="disulfide bond" evidence="1">
    <location>
        <begin position="24"/>
        <end position="43"/>
    </location>
</feature>
<feature type="disulfide bond" evidence="1">
    <location>
        <begin position="32"/>
        <end position="64"/>
    </location>
</feature>
<feature type="disulfide bond" evidence="1">
    <location>
        <begin position="68"/>
        <end position="97"/>
    </location>
</feature>
<feature type="disulfide bond" evidence="1">
    <location>
        <begin position="75"/>
        <end position="94"/>
    </location>
</feature>
<feature type="disulfide bond" evidence="1">
    <location>
        <begin position="83"/>
        <end position="115"/>
    </location>
</feature>
<organism>
    <name type="scientific">Canis lupus familiaris</name>
    <name type="common">Dog</name>
    <name type="synonym">Canis familiaris</name>
    <dbReference type="NCBI Taxonomy" id="9615"/>
    <lineage>
        <taxon>Eukaryota</taxon>
        <taxon>Metazoa</taxon>
        <taxon>Chordata</taxon>
        <taxon>Craniata</taxon>
        <taxon>Vertebrata</taxon>
        <taxon>Euteleostomi</taxon>
        <taxon>Mammalia</taxon>
        <taxon>Eutheria</taxon>
        <taxon>Laurasiatheria</taxon>
        <taxon>Carnivora</taxon>
        <taxon>Caniformia</taxon>
        <taxon>Canidae</taxon>
        <taxon>Canis</taxon>
    </lineage>
</organism>
<sequence>GPPPAIGREVDCSNYKGKGSQIACPRLHQPICGTDHKTYSNECMFCALTLNKKFEVRKLQDTACDIECTEYSDMCTMDYRPLCGSDGKNYSNKCSFCNAVKKSRGTIFLAKHGEC</sequence>
<accession>P01002</accession>
<proteinExistence type="evidence at protein level"/>
<name>IPSG_CANLF</name>